<evidence type="ECO:0000255" key="1">
    <source>
        <dbReference type="HAMAP-Rule" id="MF_01579"/>
    </source>
</evidence>
<evidence type="ECO:0000305" key="2"/>
<keyword id="KW-0963">Cytoplasm</keyword>
<keyword id="KW-0489">Methyltransferase</keyword>
<keyword id="KW-0694">RNA-binding</keyword>
<keyword id="KW-0698">rRNA processing</keyword>
<keyword id="KW-0949">S-adenosyl-L-methionine</keyword>
<keyword id="KW-0808">Transferase</keyword>
<organism>
    <name type="scientific">Salmonella choleraesuis (strain SC-B67)</name>
    <dbReference type="NCBI Taxonomy" id="321314"/>
    <lineage>
        <taxon>Bacteria</taxon>
        <taxon>Pseudomonadati</taxon>
        <taxon>Pseudomonadota</taxon>
        <taxon>Gammaproteobacteria</taxon>
        <taxon>Enterobacterales</taxon>
        <taxon>Enterobacteriaceae</taxon>
        <taxon>Salmonella</taxon>
    </lineage>
</organism>
<comment type="function">
    <text evidence="1">Specifically methylates the cytosine at position 1407 (m5C1407) of 16S rRNA.</text>
</comment>
<comment type="catalytic activity">
    <reaction evidence="1">
        <text>cytidine(1407) in 16S rRNA + S-adenosyl-L-methionine = 5-methylcytidine(1407) in 16S rRNA + S-adenosyl-L-homocysteine + H(+)</text>
        <dbReference type="Rhea" id="RHEA:42756"/>
        <dbReference type="Rhea" id="RHEA-COMP:10223"/>
        <dbReference type="Rhea" id="RHEA-COMP:10224"/>
        <dbReference type="ChEBI" id="CHEBI:15378"/>
        <dbReference type="ChEBI" id="CHEBI:57856"/>
        <dbReference type="ChEBI" id="CHEBI:59789"/>
        <dbReference type="ChEBI" id="CHEBI:74483"/>
        <dbReference type="ChEBI" id="CHEBI:82748"/>
        <dbReference type="EC" id="2.1.1.178"/>
    </reaction>
</comment>
<comment type="subcellular location">
    <subcellularLocation>
        <location evidence="1">Cytoplasm</location>
    </subcellularLocation>
</comment>
<comment type="similarity">
    <text evidence="1">Belongs to the class I-like SAM-binding methyltransferase superfamily. RsmB/NOP family.</text>
</comment>
<comment type="sequence caution" evidence="2">
    <conflict type="erroneous initiation">
        <sequence resource="EMBL-CDS" id="AAX65752"/>
    </conflict>
</comment>
<name>RSMF_SALCH</name>
<accession>Q57NF9</accession>
<reference key="1">
    <citation type="journal article" date="2005" name="Nucleic Acids Res.">
        <title>The genome sequence of Salmonella enterica serovar Choleraesuis, a highly invasive and resistant zoonotic pathogen.</title>
        <authorList>
            <person name="Chiu C.-H."/>
            <person name="Tang P."/>
            <person name="Chu C."/>
            <person name="Hu S."/>
            <person name="Bao Q."/>
            <person name="Yu J."/>
            <person name="Chou Y.-Y."/>
            <person name="Wang H.-S."/>
            <person name="Lee Y.-S."/>
        </authorList>
    </citation>
    <scope>NUCLEOTIDE SEQUENCE [LARGE SCALE GENOMIC DNA]</scope>
    <source>
        <strain>SC-B67</strain>
    </source>
</reference>
<dbReference type="EC" id="2.1.1.178" evidence="1"/>
<dbReference type="EMBL" id="AE017220">
    <property type="protein sequence ID" value="AAX65752.1"/>
    <property type="status" value="ALT_INIT"/>
    <property type="molecule type" value="Genomic_DNA"/>
</dbReference>
<dbReference type="RefSeq" id="WP_001540209.1">
    <property type="nucleotide sequence ID" value="NC_006905.1"/>
</dbReference>
<dbReference type="SMR" id="Q57NF9"/>
<dbReference type="KEGG" id="sec:SCH_1846"/>
<dbReference type="HOGENOM" id="CLU_005316_6_2_6"/>
<dbReference type="Proteomes" id="UP000000538">
    <property type="component" value="Chromosome"/>
</dbReference>
<dbReference type="GO" id="GO:0005737">
    <property type="term" value="C:cytoplasm"/>
    <property type="evidence" value="ECO:0007669"/>
    <property type="project" value="UniProtKB-SubCell"/>
</dbReference>
<dbReference type="GO" id="GO:0003723">
    <property type="term" value="F:RNA binding"/>
    <property type="evidence" value="ECO:0007669"/>
    <property type="project" value="UniProtKB-KW"/>
</dbReference>
<dbReference type="GO" id="GO:0009383">
    <property type="term" value="F:rRNA (cytosine-C5-)-methyltransferase activity"/>
    <property type="evidence" value="ECO:0007669"/>
    <property type="project" value="TreeGrafter"/>
</dbReference>
<dbReference type="GO" id="GO:0070475">
    <property type="term" value="P:rRNA base methylation"/>
    <property type="evidence" value="ECO:0007669"/>
    <property type="project" value="TreeGrafter"/>
</dbReference>
<dbReference type="CDD" id="cd02440">
    <property type="entry name" value="AdoMet_MTases"/>
    <property type="match status" value="1"/>
</dbReference>
<dbReference type="FunFam" id="3.10.450.720:FF:000001">
    <property type="entry name" value="Ribosomal RNA small subunit methyltransferase F"/>
    <property type="match status" value="1"/>
</dbReference>
<dbReference type="FunFam" id="3.40.50.150:FF:000079">
    <property type="entry name" value="Ribosomal RNA small subunit methyltransferase F"/>
    <property type="match status" value="1"/>
</dbReference>
<dbReference type="Gene3D" id="3.10.450.720">
    <property type="match status" value="1"/>
</dbReference>
<dbReference type="Gene3D" id="3.40.50.150">
    <property type="entry name" value="Vaccinia Virus protein VP39"/>
    <property type="match status" value="1"/>
</dbReference>
<dbReference type="HAMAP" id="MF_01579">
    <property type="entry name" value="16SrRNA_methyltr_F"/>
    <property type="match status" value="1"/>
</dbReference>
<dbReference type="InterPro" id="IPR031341">
    <property type="entry name" value="Methyltr_RsmF_N"/>
</dbReference>
<dbReference type="InterPro" id="IPR049560">
    <property type="entry name" value="MeTrfase_RsmB-F_NOP2_cat"/>
</dbReference>
<dbReference type="InterPro" id="IPR001678">
    <property type="entry name" value="MeTrfase_RsmB-F_NOP2_dom"/>
</dbReference>
<dbReference type="InterPro" id="IPR027391">
    <property type="entry name" value="Nol1_Nop2_Fmu_2"/>
</dbReference>
<dbReference type="InterPro" id="IPR011023">
    <property type="entry name" value="Nop2p"/>
</dbReference>
<dbReference type="InterPro" id="IPR023267">
    <property type="entry name" value="RCMT"/>
</dbReference>
<dbReference type="InterPro" id="IPR023545">
    <property type="entry name" value="rRNA_ssu_MeTfrase_F"/>
</dbReference>
<dbReference type="InterPro" id="IPR018314">
    <property type="entry name" value="RsmB/NOL1/NOP2-like_CS"/>
</dbReference>
<dbReference type="InterPro" id="IPR029063">
    <property type="entry name" value="SAM-dependent_MTases_sf"/>
</dbReference>
<dbReference type="InterPro" id="IPR048457">
    <property type="entry name" value="YebU_pre-PUA_dom"/>
</dbReference>
<dbReference type="NCBIfam" id="TIGR00446">
    <property type="entry name" value="nop2p"/>
    <property type="match status" value="1"/>
</dbReference>
<dbReference type="NCBIfam" id="NF008898">
    <property type="entry name" value="PRK11933.1"/>
    <property type="match status" value="1"/>
</dbReference>
<dbReference type="PANTHER" id="PTHR22807:SF30">
    <property type="entry name" value="28S RRNA (CYTOSINE(4447)-C(5))-METHYLTRANSFERASE-RELATED"/>
    <property type="match status" value="1"/>
</dbReference>
<dbReference type="PANTHER" id="PTHR22807">
    <property type="entry name" value="NOP2 YEAST -RELATED NOL1/NOP2/FMU SUN DOMAIN-CONTAINING"/>
    <property type="match status" value="1"/>
</dbReference>
<dbReference type="Pfam" id="PF01189">
    <property type="entry name" value="Methyltr_RsmB-F"/>
    <property type="match status" value="1"/>
</dbReference>
<dbReference type="Pfam" id="PF17125">
    <property type="entry name" value="Methyltr_RsmF_N"/>
    <property type="match status" value="1"/>
</dbReference>
<dbReference type="Pfam" id="PF13636">
    <property type="entry name" value="Methyltranf_PUA"/>
    <property type="match status" value="1"/>
</dbReference>
<dbReference type="Pfam" id="PF21150">
    <property type="entry name" value="YebU_pre-PUA_dom"/>
    <property type="match status" value="1"/>
</dbReference>
<dbReference type="PRINTS" id="PR02008">
    <property type="entry name" value="RCMTFAMILY"/>
</dbReference>
<dbReference type="SUPFAM" id="SSF53335">
    <property type="entry name" value="S-adenosyl-L-methionine-dependent methyltransferases"/>
    <property type="match status" value="1"/>
</dbReference>
<dbReference type="PROSITE" id="PS01153">
    <property type="entry name" value="NOL1_NOP2_SUN"/>
    <property type="match status" value="1"/>
</dbReference>
<dbReference type="PROSITE" id="PS51686">
    <property type="entry name" value="SAM_MT_RSMB_NOP"/>
    <property type="match status" value="1"/>
</dbReference>
<sequence>MAQHAVYFPDAFLTQMREAMPSTLSFDEFISACQRPLRRSIRINTLKISVADFLALIAPYGWSLTPIPWCHEGFWIERDDEEALPLGSTAEHLSGLFYIQEASSMLPVAALFADDNHPQRVMDMAAAPGSKTTQIAARMGNRGTILANEFSASRVKVLHANISRCGIANTALTHFDGRVFGAALPEMFDAILLDAPCSGEGVVRKDPDALKNWSPESNLDIAATQRELLDSAFHALRPGGTLVYSTCTLNRQENEAVCLWLKETYADAVEFLPLGDLFPDADRALTPEGFLHVFPQIYDCEGFFVARLRKMSSLPAMPAPGYKVGAFPFTPLKGREALHVTQAANAVGLLWDENLHLWQREKEVWLFPAEIESLIGKVRFSRLGIKLAESHNKGYRWQHEATIALACPTHAHAFELSVQEAEEWYRGRDIYPQTPPAADDVLVTFQHQPLGLAKRIGARIKNSYPRELVRDGKLFTGNS</sequence>
<protein>
    <recommendedName>
        <fullName evidence="1">Ribosomal RNA small subunit methyltransferase F</fullName>
        <ecNumber evidence="1">2.1.1.178</ecNumber>
    </recommendedName>
    <alternativeName>
        <fullName evidence="1">16S rRNA m5C1407 methyltransferase</fullName>
    </alternativeName>
    <alternativeName>
        <fullName evidence="1">rRNA (cytosine-C(5)-)-methyltransferase RsmF</fullName>
    </alternativeName>
</protein>
<feature type="chain" id="PRO_0000285005" description="Ribosomal RNA small subunit methyltransferase F">
    <location>
        <begin position="1"/>
        <end position="479"/>
    </location>
</feature>
<feature type="active site" description="Nucleophile" evidence="1">
    <location>
        <position position="247"/>
    </location>
</feature>
<feature type="binding site" evidence="1">
    <location>
        <begin position="125"/>
        <end position="131"/>
    </location>
    <ligand>
        <name>S-adenosyl-L-methionine</name>
        <dbReference type="ChEBI" id="CHEBI:59789"/>
    </ligand>
</feature>
<feature type="binding site" evidence="1">
    <location>
        <position position="149"/>
    </location>
    <ligand>
        <name>S-adenosyl-L-methionine</name>
        <dbReference type="ChEBI" id="CHEBI:59789"/>
    </ligand>
</feature>
<feature type="binding site" evidence="1">
    <location>
        <position position="176"/>
    </location>
    <ligand>
        <name>S-adenosyl-L-methionine</name>
        <dbReference type="ChEBI" id="CHEBI:59789"/>
    </ligand>
</feature>
<feature type="binding site" evidence="1">
    <location>
        <position position="194"/>
    </location>
    <ligand>
        <name>S-adenosyl-L-methionine</name>
        <dbReference type="ChEBI" id="CHEBI:59789"/>
    </ligand>
</feature>
<gene>
    <name evidence="1" type="primary">rsmF</name>
    <name type="ordered locus">SCH_1846</name>
</gene>
<proteinExistence type="inferred from homology"/>